<sequence>MIASEIFERGVQDPFCQDCDYEDETDVQSFLGSNDLNDFVNSKLASFSFENSSKSNNSHHSSSTNAGNTSRHIGNHTIGHHLRKIKTAPHHLYGFVPANSTNNSNEPIRPSPRRIRANSSTLIHQLSRQSTRQSSLGDAADSCFDHKCIKPRSRHSSCYGIPTHLYGLEKYVSSELDSLAVANDQSNDLTSPLTSVSTPASNSNSYLNLNSSSAAYPSSYLSNEKNNRLKLISHGKISSNNVPGHSGNLNHYHRERTPSNLRRESFSLLSNGSSSSPLQTRNNSYSNSLVKSPSNSSLNTSVASSNEESSPHTSNCLEERNPRRKSFIKLSLASSFSN</sequence>
<dbReference type="EMBL" id="ACFL01000033">
    <property type="protein sequence ID" value="EEU08479.1"/>
    <property type="molecule type" value="Genomic_DNA"/>
</dbReference>
<dbReference type="OrthoDB" id="5213at4893"/>
<dbReference type="Proteomes" id="UP000008073">
    <property type="component" value="Unassembled WGS sequence"/>
</dbReference>
<dbReference type="InterPro" id="IPR031443">
    <property type="entry name" value="Mbr1"/>
</dbReference>
<dbReference type="Pfam" id="PF17058">
    <property type="entry name" value="MBR1"/>
    <property type="match status" value="2"/>
</dbReference>
<feature type="chain" id="PRO_0000408857" description="Increasing suppression factor 1">
    <location>
        <begin position="1"/>
        <end position="338"/>
    </location>
</feature>
<feature type="region of interest" description="Disordered" evidence="3">
    <location>
        <begin position="50"/>
        <end position="72"/>
    </location>
</feature>
<feature type="region of interest" description="Disordered" evidence="3">
    <location>
        <begin position="267"/>
        <end position="322"/>
    </location>
</feature>
<feature type="compositionally biased region" description="Low complexity" evidence="3">
    <location>
        <begin position="50"/>
        <end position="70"/>
    </location>
</feature>
<feature type="compositionally biased region" description="Low complexity" evidence="3">
    <location>
        <begin position="267"/>
        <end position="306"/>
    </location>
</feature>
<feature type="compositionally biased region" description="Polar residues" evidence="3">
    <location>
        <begin position="307"/>
        <end position="316"/>
    </location>
</feature>
<feature type="modified residue" description="Phosphoserine" evidence="2">
    <location>
        <position position="119"/>
    </location>
</feature>
<evidence type="ECO:0000250" key="1"/>
<evidence type="ECO:0000250" key="2">
    <source>
        <dbReference type="UniProtKB" id="P32488"/>
    </source>
</evidence>
<evidence type="ECO:0000256" key="3">
    <source>
        <dbReference type="SAM" id="MobiDB-lite"/>
    </source>
</evidence>
<evidence type="ECO:0000305" key="4"/>
<name>ISF1_YEAS2</name>
<reference key="1">
    <citation type="journal article" date="2009" name="Genome Res.">
        <title>Genome structure of a Saccharomyces cerevisiae strain widely used in bioethanol production.</title>
        <authorList>
            <person name="Argueso J.L."/>
            <person name="Carazzolle M.F."/>
            <person name="Mieczkowski P.A."/>
            <person name="Duarte F.M."/>
            <person name="Netto O.V.C."/>
            <person name="Missawa S.K."/>
            <person name="Galzerani F."/>
            <person name="Costa G.G.L."/>
            <person name="Vidal R.O."/>
            <person name="Noronha M.F."/>
            <person name="Dominska M."/>
            <person name="Andrietta M.G.S."/>
            <person name="Andrietta S.R."/>
            <person name="Cunha A.F."/>
            <person name="Gomes L.H."/>
            <person name="Tavares F.C.A."/>
            <person name="Alcarde A.R."/>
            <person name="Dietrich F.S."/>
            <person name="McCusker J.H."/>
            <person name="Petes T.D."/>
            <person name="Pereira G.A.G."/>
        </authorList>
    </citation>
    <scope>NUCLEOTIDE SEQUENCE [LARGE SCALE GENOMIC DNA]</scope>
    <source>
        <strain>JAY291</strain>
    </source>
</reference>
<keyword id="KW-0597">Phosphoprotein</keyword>
<organism>
    <name type="scientific">Saccharomyces cerevisiae (strain JAY291)</name>
    <name type="common">Baker's yeast</name>
    <dbReference type="NCBI Taxonomy" id="574961"/>
    <lineage>
        <taxon>Eukaryota</taxon>
        <taxon>Fungi</taxon>
        <taxon>Dikarya</taxon>
        <taxon>Ascomycota</taxon>
        <taxon>Saccharomycotina</taxon>
        <taxon>Saccharomycetes</taxon>
        <taxon>Saccharomycetales</taxon>
        <taxon>Saccharomycetaceae</taxon>
        <taxon>Saccharomyces</taxon>
    </lineage>
</organism>
<gene>
    <name type="primary">ISF1</name>
    <name type="synonym">MBR3</name>
    <name type="ORF">C1Q_01028</name>
</gene>
<comment type="function">
    <text evidence="1">Could influence the NAM7/UPF1 function, possibly at the level of mRNA turnover. Participates in mitochondrial biogenesis (By similarity).</text>
</comment>
<comment type="similarity">
    <text evidence="4">Belongs to the ISF1/MBR1 family.</text>
</comment>
<proteinExistence type="inferred from homology"/>
<protein>
    <recommendedName>
        <fullName>Increasing suppression factor 1</fullName>
    </recommendedName>
    <alternativeName>
        <fullName>Mitochondrial biogenesis regulation protein 3</fullName>
    </alternativeName>
</protein>
<accession>C7GL43</accession>